<reference key="1">
    <citation type="journal article" date="2007" name="Genome Biol.">
        <title>Characterization and modeling of the Haemophilus influenzae core and supragenomes based on the complete genomic sequences of Rd and 12 clinical nontypeable strains.</title>
        <authorList>
            <person name="Hogg J.S."/>
            <person name="Hu F.Z."/>
            <person name="Janto B."/>
            <person name="Boissy R."/>
            <person name="Hayes J."/>
            <person name="Keefe R."/>
            <person name="Post J.C."/>
            <person name="Ehrlich G.D."/>
        </authorList>
    </citation>
    <scope>NUCLEOTIDE SEQUENCE [LARGE SCALE GENOMIC DNA]</scope>
    <source>
        <strain>PittGG</strain>
    </source>
</reference>
<organism>
    <name type="scientific">Haemophilus influenzae (strain PittGG)</name>
    <dbReference type="NCBI Taxonomy" id="374931"/>
    <lineage>
        <taxon>Bacteria</taxon>
        <taxon>Pseudomonadati</taxon>
        <taxon>Pseudomonadota</taxon>
        <taxon>Gammaproteobacteria</taxon>
        <taxon>Pasteurellales</taxon>
        <taxon>Pasteurellaceae</taxon>
        <taxon>Haemophilus</taxon>
    </lineage>
</organism>
<sequence>MISLESQVLERHLSFFDGKSVLFAGGISDNFPQTLASKCSSIQIWSCYFDYARTQSAVNFSVEFQGQADLIVYYWTKNKQEVNFQLLQLLAQASIGQEILIIGENRCGVRSVEKTLAPYGEIAKIDSARRCGLYHFSLQNKPHFELKNFWRTYQHSTLENLTIYSLPGVFSAAELDTGTELLLSTIDNKIKGKVLDLGCGAGVIGSMIKKRAPNAQITMTDIHAMALESARKTLSENQLQGEVYASDVFSDIEGKFDLIISNPPFHDGIDTAYRTVKELITQAKWHLNQGGELRIVANAFLPYPELLRQYFNDYQVLAQTGKFKVYSVKN</sequence>
<accession>A5UFI6</accession>
<comment type="function">
    <text evidence="1">Specifically methylates the guanine in position 1207 of 16S rRNA in the 30S particle.</text>
</comment>
<comment type="catalytic activity">
    <reaction evidence="1">
        <text>guanosine(1207) in 16S rRNA + S-adenosyl-L-methionine = N(2)-methylguanosine(1207) in 16S rRNA + S-adenosyl-L-homocysteine + H(+)</text>
        <dbReference type="Rhea" id="RHEA:42736"/>
        <dbReference type="Rhea" id="RHEA-COMP:10213"/>
        <dbReference type="Rhea" id="RHEA-COMP:10214"/>
        <dbReference type="ChEBI" id="CHEBI:15378"/>
        <dbReference type="ChEBI" id="CHEBI:57856"/>
        <dbReference type="ChEBI" id="CHEBI:59789"/>
        <dbReference type="ChEBI" id="CHEBI:74269"/>
        <dbReference type="ChEBI" id="CHEBI:74481"/>
        <dbReference type="EC" id="2.1.1.172"/>
    </reaction>
</comment>
<comment type="subunit">
    <text evidence="1">Monomer.</text>
</comment>
<comment type="subcellular location">
    <subcellularLocation>
        <location evidence="1">Cytoplasm</location>
    </subcellularLocation>
</comment>
<comment type="similarity">
    <text evidence="1">Belongs to the methyltransferase superfamily. RsmC family.</text>
</comment>
<evidence type="ECO:0000255" key="1">
    <source>
        <dbReference type="HAMAP-Rule" id="MF_01862"/>
    </source>
</evidence>
<keyword id="KW-0963">Cytoplasm</keyword>
<keyword id="KW-0489">Methyltransferase</keyword>
<keyword id="KW-0698">rRNA processing</keyword>
<keyword id="KW-0949">S-adenosyl-L-methionine</keyword>
<keyword id="KW-0808">Transferase</keyword>
<feature type="chain" id="PRO_0000369720" description="Ribosomal RNA small subunit methyltransferase C">
    <location>
        <begin position="1"/>
        <end position="330"/>
    </location>
</feature>
<name>RSMC_HAEIG</name>
<gene>
    <name evidence="1" type="primary">rsmC</name>
    <name type="ordered locus">CGSHiGG_02520</name>
</gene>
<dbReference type="EC" id="2.1.1.172" evidence="1"/>
<dbReference type="EMBL" id="CP000672">
    <property type="protein sequence ID" value="ABQ99541.1"/>
    <property type="molecule type" value="Genomic_DNA"/>
</dbReference>
<dbReference type="SMR" id="A5UFI6"/>
<dbReference type="KEGG" id="hiq:CGSHiGG_02520"/>
<dbReference type="HOGENOM" id="CLU_049581_0_1_6"/>
<dbReference type="Proteomes" id="UP000001990">
    <property type="component" value="Chromosome"/>
</dbReference>
<dbReference type="GO" id="GO:0005737">
    <property type="term" value="C:cytoplasm"/>
    <property type="evidence" value="ECO:0007669"/>
    <property type="project" value="UniProtKB-SubCell"/>
</dbReference>
<dbReference type="GO" id="GO:0052914">
    <property type="term" value="F:16S rRNA (guanine(1207)-N(2))-methyltransferase activity"/>
    <property type="evidence" value="ECO:0007669"/>
    <property type="project" value="UniProtKB-EC"/>
</dbReference>
<dbReference type="GO" id="GO:0003676">
    <property type="term" value="F:nucleic acid binding"/>
    <property type="evidence" value="ECO:0007669"/>
    <property type="project" value="InterPro"/>
</dbReference>
<dbReference type="CDD" id="cd02440">
    <property type="entry name" value="AdoMet_MTases"/>
    <property type="match status" value="1"/>
</dbReference>
<dbReference type="Gene3D" id="3.40.50.150">
    <property type="entry name" value="Vaccinia Virus protein VP39"/>
    <property type="match status" value="2"/>
</dbReference>
<dbReference type="HAMAP" id="MF_01862">
    <property type="entry name" value="16SrRNA_methyltr_C"/>
    <property type="match status" value="1"/>
</dbReference>
<dbReference type="InterPro" id="IPR002052">
    <property type="entry name" value="DNA_methylase_N6_adenine_CS"/>
</dbReference>
<dbReference type="InterPro" id="IPR013675">
    <property type="entry name" value="Mtase_sm_N"/>
</dbReference>
<dbReference type="InterPro" id="IPR023543">
    <property type="entry name" value="rRNA_ssu_MeTfrase_C"/>
</dbReference>
<dbReference type="InterPro" id="IPR046977">
    <property type="entry name" value="RsmC/RlmG"/>
</dbReference>
<dbReference type="InterPro" id="IPR029063">
    <property type="entry name" value="SAM-dependent_MTases_sf"/>
</dbReference>
<dbReference type="InterPro" id="IPR007848">
    <property type="entry name" value="Small_mtfrase_dom"/>
</dbReference>
<dbReference type="NCBIfam" id="NF007023">
    <property type="entry name" value="PRK09489.1"/>
    <property type="match status" value="1"/>
</dbReference>
<dbReference type="PANTHER" id="PTHR47816">
    <property type="entry name" value="RIBOSOMAL RNA SMALL SUBUNIT METHYLTRANSFERASE C"/>
    <property type="match status" value="1"/>
</dbReference>
<dbReference type="PANTHER" id="PTHR47816:SF4">
    <property type="entry name" value="RIBOSOMAL RNA SMALL SUBUNIT METHYLTRANSFERASE C"/>
    <property type="match status" value="1"/>
</dbReference>
<dbReference type="Pfam" id="PF05175">
    <property type="entry name" value="MTS"/>
    <property type="match status" value="1"/>
</dbReference>
<dbReference type="Pfam" id="PF08468">
    <property type="entry name" value="MTS_N"/>
    <property type="match status" value="1"/>
</dbReference>
<dbReference type="SUPFAM" id="SSF53335">
    <property type="entry name" value="S-adenosyl-L-methionine-dependent methyltransferases"/>
    <property type="match status" value="1"/>
</dbReference>
<proteinExistence type="inferred from homology"/>
<protein>
    <recommendedName>
        <fullName evidence="1">Ribosomal RNA small subunit methyltransferase C</fullName>
        <ecNumber evidence="1">2.1.1.172</ecNumber>
    </recommendedName>
    <alternativeName>
        <fullName evidence="1">16S rRNA m2G1207 methyltransferase</fullName>
    </alternativeName>
    <alternativeName>
        <fullName evidence="1">rRNA (guanine-N(2)-)-methyltransferase RsmC</fullName>
    </alternativeName>
</protein>